<name>PSA7_MOUSE</name>
<sequence length="248" mass="27855">MSYDRAITVFSPDGHLFQVEYAQEAVKKGSTAVGVRGKDIVVLGVEKKSVAKLQDERTVRKICALDDNVCMAFAGLTADARIVINRARVECQSHRLTVEDPVTVEYITRYIASLKQRYTQSNGRRPFGISALIVGFDFDGTPRLYQTDPSGTYHAWKANAIGRGAKSVREFLEKNYTDDAIETDDLTIKLVIKALLEVVQSGGKNIELAVMRRDQPLKILNPEEIEKYVAEIEKEKEENEKKKQKKAS</sequence>
<protein>
    <recommendedName>
        <fullName>Proteasome subunit alpha type-7</fullName>
    </recommendedName>
    <alternativeName>
        <fullName>Proteasome subunit RC6-1</fullName>
    </alternativeName>
    <alternativeName>
        <fullName>Proteasome subunit alpha-4</fullName>
        <shortName>alpha-4</shortName>
    </alternativeName>
</protein>
<reference key="1">
    <citation type="journal article" date="1999" name="Immunogenetics">
        <title>The complete primary structure of mouse 20S proteasomes.</title>
        <authorList>
            <person name="Elenich L.A."/>
            <person name="Nandi D."/>
            <person name="Kent E.A."/>
            <person name="McCluskey T.S."/>
            <person name="Cruz M."/>
            <person name="Iyer M.N."/>
            <person name="Woodward E.C."/>
            <person name="Conn C.W."/>
            <person name="Ochoa A.L."/>
            <person name="Ginsburg D.B."/>
            <person name="Monaco J.J."/>
        </authorList>
    </citation>
    <scope>NUCLEOTIDE SEQUENCE [MRNA]</scope>
    <source>
        <strain>B10.BR</strain>
    </source>
</reference>
<reference key="2">
    <citation type="journal article" date="2004" name="Genome Res.">
        <title>The status, quality, and expansion of the NIH full-length cDNA project: the Mammalian Gene Collection (MGC).</title>
        <authorList>
            <consortium name="The MGC Project Team"/>
        </authorList>
    </citation>
    <scope>NUCLEOTIDE SEQUENCE [LARGE SCALE MRNA]</scope>
    <source>
        <strain>FVB/N</strain>
        <tissue>Mammary tumor</tissue>
    </source>
</reference>
<reference key="3">
    <citation type="submission" date="2007-07" db="UniProtKB">
        <authorList>
            <person name="Lubec G."/>
            <person name="Yang J.W."/>
            <person name="Zigmond M."/>
        </authorList>
    </citation>
    <scope>PROTEIN SEQUENCE OF 96-109</scope>
    <source>
        <tissue>Brain</tissue>
    </source>
</reference>
<reference key="4">
    <citation type="journal article" date="2006" name="Mol. Cell. Biol.">
        <title>Proteasome activator PA200 is required for normal spermatogenesis.</title>
        <authorList>
            <person name="Khor B."/>
            <person name="Bredemeyer A.L."/>
            <person name="Huang C.-Y."/>
            <person name="Turnbull I.R."/>
            <person name="Evans R."/>
            <person name="Maggi L.B. Jr."/>
            <person name="White J.M."/>
            <person name="Walker L.M."/>
            <person name="Carnes K."/>
            <person name="Hess R.A."/>
            <person name="Sleckman B.P."/>
        </authorList>
    </citation>
    <scope>FUNCTION</scope>
</reference>
<reference key="5">
    <citation type="journal article" date="2006" name="Proteomics">
        <title>The up-regulation of proteasome subunits and lysosomal proteases in hepatocellular carcinomas of the HBx gene knockin transgenic mice.</title>
        <authorList>
            <person name="Cui F."/>
            <person name="Wang Y."/>
            <person name="Wang J."/>
            <person name="Wei K."/>
            <person name="Hu J."/>
            <person name="Liu F."/>
            <person name="Wang H."/>
            <person name="Zhao X."/>
            <person name="Zhang X."/>
            <person name="Yang X."/>
        </authorList>
    </citation>
    <scope>INDUCTION</scope>
</reference>
<reference key="6">
    <citation type="journal article" date="2006" name="Circ. Res.">
        <title>Mapping the murine cardiac 26S proteasome complexes.</title>
        <authorList>
            <person name="Gomes A.V."/>
            <person name="Zong C."/>
            <person name="Edmondson R.D."/>
            <person name="Li X."/>
            <person name="Stefani E."/>
            <person name="Zhang J."/>
            <person name="Jones R.C."/>
            <person name="Thyparambil S."/>
            <person name="Wang G.W."/>
            <person name="Qiao X."/>
            <person name="Bardag-Gorce F."/>
            <person name="Ping P."/>
        </authorList>
    </citation>
    <scope>IDENTIFICATION IN THE 20S PROTEASOME CORE COMPLEX</scope>
</reference>
<reference key="7">
    <citation type="journal article" date="2010" name="Cell">
        <title>A tissue-specific atlas of mouse protein phosphorylation and expression.</title>
        <authorList>
            <person name="Huttlin E.L."/>
            <person name="Jedrychowski M.P."/>
            <person name="Elias J.E."/>
            <person name="Goswami T."/>
            <person name="Rad R."/>
            <person name="Beausoleil S.A."/>
            <person name="Villen J."/>
            <person name="Haas W."/>
            <person name="Sowa M.E."/>
            <person name="Gygi S.P."/>
        </authorList>
    </citation>
    <scope>IDENTIFICATION BY MASS SPECTROMETRY [LARGE SCALE ANALYSIS]</scope>
    <source>
        <tissue>Brain</tissue>
        <tissue>Brown adipose tissue</tissue>
        <tissue>Heart</tissue>
        <tissue>Kidney</tissue>
        <tissue>Liver</tissue>
        <tissue>Lung</tissue>
        <tissue>Pancreas</tissue>
        <tissue>Spleen</tissue>
        <tissue>Testis</tissue>
    </source>
</reference>
<reference key="8">
    <citation type="journal article" date="2012" name="Mol. Cell. Proteomics">
        <title>Mapping of O-GlcNAc sites of 20 S proteasome subunits and Hsp90 by a novel biotin-cystamine tag.</title>
        <authorList>
            <person name="Overath T."/>
            <person name="Kuckelkorn U."/>
            <person name="Henklein P."/>
            <person name="Strehl B."/>
            <person name="Bonar D."/>
            <person name="Kloss A."/>
            <person name="Siele D."/>
            <person name="Kloetzel P.M."/>
            <person name="Janek K."/>
        </authorList>
    </citation>
    <scope>GLYCOSYLATION AT SER-130</scope>
    <source>
        <tissue>Brain</tissue>
        <tissue>Spleen</tissue>
    </source>
</reference>
<reference key="9">
    <citation type="journal article" date="2012" name="Cell">
        <title>Immuno- and constitutive proteasome crystal structures reveal differences in substrate and inhibitor specificity.</title>
        <authorList>
            <person name="Huber E.M."/>
            <person name="Basler M."/>
            <person name="Schwab R."/>
            <person name="Heinemeyer W."/>
            <person name="Kirk C.J."/>
            <person name="Groettrup M."/>
            <person name="Groll M."/>
        </authorList>
    </citation>
    <scope>X-RAY CRYSTALLOGRAPHY (2.90 ANGSTROMS) OF 20S IMMUNOPROTEASOME</scope>
    <scope>SUBUNIT</scope>
    <scope>FUNCTION</scope>
    <scope>TISSUE SPECIFICITY</scope>
</reference>
<accession>Q9Z2U0</accession>
<organism>
    <name type="scientific">Mus musculus</name>
    <name type="common">Mouse</name>
    <dbReference type="NCBI Taxonomy" id="10090"/>
    <lineage>
        <taxon>Eukaryota</taxon>
        <taxon>Metazoa</taxon>
        <taxon>Chordata</taxon>
        <taxon>Craniata</taxon>
        <taxon>Vertebrata</taxon>
        <taxon>Euteleostomi</taxon>
        <taxon>Mammalia</taxon>
        <taxon>Eutheria</taxon>
        <taxon>Euarchontoglires</taxon>
        <taxon>Glires</taxon>
        <taxon>Rodentia</taxon>
        <taxon>Myomorpha</taxon>
        <taxon>Muroidea</taxon>
        <taxon>Muridae</taxon>
        <taxon>Murinae</taxon>
        <taxon>Mus</taxon>
        <taxon>Mus</taxon>
    </lineage>
</organism>
<evidence type="ECO:0000250" key="1">
    <source>
        <dbReference type="UniProtKB" id="O14818"/>
    </source>
</evidence>
<evidence type="ECO:0000255" key="2">
    <source>
        <dbReference type="PROSITE-ProRule" id="PRU00808"/>
    </source>
</evidence>
<evidence type="ECO:0000269" key="3">
    <source>
    </source>
</evidence>
<evidence type="ECO:0000269" key="4">
    <source>
    </source>
</evidence>
<evidence type="ECO:0000269" key="5">
    <source>
    </source>
</evidence>
<evidence type="ECO:0000269" key="6">
    <source>
    </source>
</evidence>
<evidence type="ECO:0000269" key="7">
    <source>
    </source>
</evidence>
<evidence type="ECO:0007829" key="8">
    <source>
        <dbReference type="PDB" id="3UNB"/>
    </source>
</evidence>
<evidence type="ECO:0007829" key="9">
    <source>
        <dbReference type="PDB" id="3UNF"/>
    </source>
</evidence>
<keyword id="KW-0002">3D-structure</keyword>
<keyword id="KW-0007">Acetylation</keyword>
<keyword id="KW-0963">Cytoplasm</keyword>
<keyword id="KW-0903">Direct protein sequencing</keyword>
<keyword id="KW-0325">Glycoprotein</keyword>
<keyword id="KW-0539">Nucleus</keyword>
<keyword id="KW-0597">Phosphoprotein</keyword>
<keyword id="KW-0647">Proteasome</keyword>
<keyword id="KW-1185">Reference proteome</keyword>
<gene>
    <name type="primary">Psma7</name>
</gene>
<dbReference type="EMBL" id="AF019662">
    <property type="protein sequence ID" value="AAC69150.1"/>
    <property type="molecule type" value="mRNA"/>
</dbReference>
<dbReference type="EMBL" id="BC008222">
    <property type="protein sequence ID" value="AAH08222.1"/>
    <property type="molecule type" value="mRNA"/>
</dbReference>
<dbReference type="CCDS" id="CCDS17166.1"/>
<dbReference type="RefSeq" id="NP_036099.1">
    <property type="nucleotide sequence ID" value="NM_011969.2"/>
</dbReference>
<dbReference type="PDB" id="3UNB">
    <property type="method" value="X-ray"/>
    <property type="resolution" value="2.90 A"/>
    <property type="chains" value="C/Q/e/s=1-248"/>
</dbReference>
<dbReference type="PDB" id="3UNE">
    <property type="method" value="X-ray"/>
    <property type="resolution" value="3.20 A"/>
    <property type="chains" value="C/Q/e/s=1-248"/>
</dbReference>
<dbReference type="PDB" id="3UNF">
    <property type="method" value="X-ray"/>
    <property type="resolution" value="2.90 A"/>
    <property type="chains" value="C/Q=1-248"/>
</dbReference>
<dbReference type="PDB" id="3UNH">
    <property type="method" value="X-ray"/>
    <property type="resolution" value="3.20 A"/>
    <property type="chains" value="C/Q=1-248"/>
</dbReference>
<dbReference type="PDB" id="8YPK">
    <property type="method" value="EM"/>
    <property type="resolution" value="2.70 A"/>
    <property type="chains" value="I/N=1-248"/>
</dbReference>
<dbReference type="PDB" id="8YVP">
    <property type="method" value="EM"/>
    <property type="resolution" value="2.50 A"/>
    <property type="chains" value="I/N=1-248"/>
</dbReference>
<dbReference type="PDBsum" id="3UNB"/>
<dbReference type="PDBsum" id="3UNE"/>
<dbReference type="PDBsum" id="3UNF"/>
<dbReference type="PDBsum" id="3UNH"/>
<dbReference type="PDBsum" id="8YPK"/>
<dbReference type="PDBsum" id="8YVP"/>
<dbReference type="EMDB" id="EMD-39482"/>
<dbReference type="EMDB" id="EMD-39612"/>
<dbReference type="SMR" id="Q9Z2U0"/>
<dbReference type="BioGRID" id="204995">
    <property type="interactions" value="61"/>
</dbReference>
<dbReference type="CORUM" id="Q9Z2U0"/>
<dbReference type="FunCoup" id="Q9Z2U0">
    <property type="interactions" value="1862"/>
</dbReference>
<dbReference type="IntAct" id="Q9Z2U0">
    <property type="interactions" value="4"/>
</dbReference>
<dbReference type="STRING" id="10090.ENSMUSP00000029082"/>
<dbReference type="MEROPS" id="T01.974"/>
<dbReference type="GlyCosmos" id="Q9Z2U0">
    <property type="glycosylation" value="1 site, No reported glycans"/>
</dbReference>
<dbReference type="GlyGen" id="Q9Z2U0">
    <property type="glycosylation" value="2 sites, 1 O-linked glycan (2 sites)"/>
</dbReference>
<dbReference type="iPTMnet" id="Q9Z2U0"/>
<dbReference type="PhosphoSitePlus" id="Q9Z2U0"/>
<dbReference type="SwissPalm" id="Q9Z2U0"/>
<dbReference type="REPRODUCTION-2DPAGE" id="Q9Z2U0"/>
<dbReference type="CPTAC" id="non-CPTAC-3734"/>
<dbReference type="jPOST" id="Q9Z2U0"/>
<dbReference type="PaxDb" id="10090-ENSMUSP00000029082"/>
<dbReference type="ProteomicsDB" id="291690"/>
<dbReference type="Pumba" id="Q9Z2U0"/>
<dbReference type="Antibodypedia" id="29428">
    <property type="antibodies" value="496 antibodies from 33 providers"/>
</dbReference>
<dbReference type="DNASU" id="26444"/>
<dbReference type="Ensembl" id="ENSMUST00000029082.9">
    <property type="protein sequence ID" value="ENSMUSP00000029082.9"/>
    <property type="gene ID" value="ENSMUSG00000027566.16"/>
</dbReference>
<dbReference type="GeneID" id="26444"/>
<dbReference type="KEGG" id="mmu:26444"/>
<dbReference type="UCSC" id="uc008oib.2">
    <property type="organism name" value="mouse"/>
</dbReference>
<dbReference type="AGR" id="MGI:1347070"/>
<dbReference type="CTD" id="5688"/>
<dbReference type="MGI" id="MGI:1347070">
    <property type="gene designation" value="Psma7"/>
</dbReference>
<dbReference type="VEuPathDB" id="HostDB:ENSMUSG00000027566"/>
<dbReference type="eggNOG" id="KOG0183">
    <property type="taxonomic scope" value="Eukaryota"/>
</dbReference>
<dbReference type="GeneTree" id="ENSGT00940000159695"/>
<dbReference type="HOGENOM" id="CLU_035750_4_0_1"/>
<dbReference type="InParanoid" id="Q9Z2U0"/>
<dbReference type="OMA" id="ICMLDHH"/>
<dbReference type="OrthoDB" id="3145928at2759"/>
<dbReference type="PhylomeDB" id="Q9Z2U0"/>
<dbReference type="TreeFam" id="TF106212"/>
<dbReference type="Reactome" id="R-MMU-1169091">
    <property type="pathway name" value="Activation of NF-kappaB in B cells"/>
</dbReference>
<dbReference type="Reactome" id="R-MMU-1234176">
    <property type="pathway name" value="Oxygen-dependent proline hydroxylation of Hypoxia-inducible Factor Alpha"/>
</dbReference>
<dbReference type="Reactome" id="R-MMU-1236978">
    <property type="pathway name" value="Cross-presentation of soluble exogenous antigens (endosomes)"/>
</dbReference>
<dbReference type="Reactome" id="R-MMU-174084">
    <property type="pathway name" value="Autodegradation of Cdh1 by Cdh1:APC/C"/>
</dbReference>
<dbReference type="Reactome" id="R-MMU-174154">
    <property type="pathway name" value="APC/C:Cdc20 mediated degradation of Securin"/>
</dbReference>
<dbReference type="Reactome" id="R-MMU-174178">
    <property type="pathway name" value="APC/C:Cdh1 mediated degradation of Cdc20 and other APC/C:Cdh1 targeted proteins in late mitosis/early G1"/>
</dbReference>
<dbReference type="Reactome" id="R-MMU-174184">
    <property type="pathway name" value="Cdc20:Phospho-APC/C mediated degradation of Cyclin A"/>
</dbReference>
<dbReference type="Reactome" id="R-MMU-187577">
    <property type="pathway name" value="SCF(Skp2)-mediated degradation of p27/p21"/>
</dbReference>
<dbReference type="Reactome" id="R-MMU-195253">
    <property type="pathway name" value="Degradation of beta-catenin by the destruction complex"/>
</dbReference>
<dbReference type="Reactome" id="R-MMU-202424">
    <property type="pathway name" value="Downstream TCR signaling"/>
</dbReference>
<dbReference type="Reactome" id="R-MMU-2467813">
    <property type="pathway name" value="Separation of Sister Chromatids"/>
</dbReference>
<dbReference type="Reactome" id="R-MMU-2871837">
    <property type="pathway name" value="FCERI mediated NF-kB activation"/>
</dbReference>
<dbReference type="Reactome" id="R-MMU-349425">
    <property type="pathway name" value="Autodegradation of the E3 ubiquitin ligase COP1"/>
</dbReference>
<dbReference type="Reactome" id="R-MMU-350562">
    <property type="pathway name" value="Regulation of ornithine decarboxylase (ODC)"/>
</dbReference>
<dbReference type="Reactome" id="R-MMU-382556">
    <property type="pathway name" value="ABC-family proteins mediated transport"/>
</dbReference>
<dbReference type="Reactome" id="R-MMU-450408">
    <property type="pathway name" value="AUF1 (hnRNP D0) binds and destabilizes mRNA"/>
</dbReference>
<dbReference type="Reactome" id="R-MMU-4608870">
    <property type="pathway name" value="Asymmetric localization of PCP proteins"/>
</dbReference>
<dbReference type="Reactome" id="R-MMU-4641257">
    <property type="pathway name" value="Degradation of AXIN"/>
</dbReference>
<dbReference type="Reactome" id="R-MMU-4641258">
    <property type="pathway name" value="Degradation of DVL"/>
</dbReference>
<dbReference type="Reactome" id="R-MMU-5358346">
    <property type="pathway name" value="Hedgehog ligand biogenesis"/>
</dbReference>
<dbReference type="Reactome" id="R-MMU-5607761">
    <property type="pathway name" value="Dectin-1 mediated noncanonical NF-kB signaling"/>
</dbReference>
<dbReference type="Reactome" id="R-MMU-5607764">
    <property type="pathway name" value="CLEC7A (Dectin-1) signaling"/>
</dbReference>
<dbReference type="Reactome" id="R-MMU-5610780">
    <property type="pathway name" value="Degradation of GLI1 by the proteasome"/>
</dbReference>
<dbReference type="Reactome" id="R-MMU-5610785">
    <property type="pathway name" value="GLI3 is processed to GLI3R by the proteasome"/>
</dbReference>
<dbReference type="Reactome" id="R-MMU-5632684">
    <property type="pathway name" value="Hedgehog 'on' state"/>
</dbReference>
<dbReference type="Reactome" id="R-MMU-5658442">
    <property type="pathway name" value="Regulation of RAS by GAPs"/>
</dbReference>
<dbReference type="Reactome" id="R-MMU-5668541">
    <property type="pathway name" value="TNFR2 non-canonical NF-kB pathway"/>
</dbReference>
<dbReference type="Reactome" id="R-MMU-5676590">
    <property type="pathway name" value="NIK--&gt;noncanonical NF-kB signaling"/>
</dbReference>
<dbReference type="Reactome" id="R-MMU-5687128">
    <property type="pathway name" value="MAPK6/MAPK4 signaling"/>
</dbReference>
<dbReference type="Reactome" id="R-MMU-5689603">
    <property type="pathway name" value="UCH proteinases"/>
</dbReference>
<dbReference type="Reactome" id="R-MMU-5689880">
    <property type="pathway name" value="Ub-specific processing proteases"/>
</dbReference>
<dbReference type="Reactome" id="R-MMU-68867">
    <property type="pathway name" value="Assembly of the pre-replicative complex"/>
</dbReference>
<dbReference type="Reactome" id="R-MMU-68949">
    <property type="pathway name" value="Orc1 removal from chromatin"/>
</dbReference>
<dbReference type="Reactome" id="R-MMU-69017">
    <property type="pathway name" value="CDK-mediated phosphorylation and removal of Cdc6"/>
</dbReference>
<dbReference type="Reactome" id="R-MMU-69481">
    <property type="pathway name" value="G2/M Checkpoints"/>
</dbReference>
<dbReference type="Reactome" id="R-MMU-69601">
    <property type="pathway name" value="Ubiquitin Mediated Degradation of Phosphorylated Cdc25A"/>
</dbReference>
<dbReference type="Reactome" id="R-MMU-75815">
    <property type="pathway name" value="Ubiquitin-dependent degradation of Cyclin D"/>
</dbReference>
<dbReference type="Reactome" id="R-MMU-8852276">
    <property type="pathway name" value="The role of GTSE1 in G2/M progression after G2 checkpoint"/>
</dbReference>
<dbReference type="Reactome" id="R-MMU-8854050">
    <property type="pathway name" value="FBXL7 down-regulates AURKA during mitotic entry and in early mitosis"/>
</dbReference>
<dbReference type="Reactome" id="R-MMU-8939236">
    <property type="pathway name" value="RUNX1 regulates transcription of genes involved in differentiation of HSCs"/>
</dbReference>
<dbReference type="Reactome" id="R-MMU-8939902">
    <property type="pathway name" value="Regulation of RUNX2 expression and activity"/>
</dbReference>
<dbReference type="Reactome" id="R-MMU-8941858">
    <property type="pathway name" value="Regulation of RUNX3 expression and activity"/>
</dbReference>
<dbReference type="Reactome" id="R-MMU-8948751">
    <property type="pathway name" value="Regulation of PTEN stability and activity"/>
</dbReference>
<dbReference type="Reactome" id="R-MMU-8951664">
    <property type="pathway name" value="Neddylation"/>
</dbReference>
<dbReference type="Reactome" id="R-MMU-9020702">
    <property type="pathway name" value="Interleukin-1 signaling"/>
</dbReference>
<dbReference type="Reactome" id="R-MMU-9755511">
    <property type="pathway name" value="KEAP1-NFE2L2 pathway"/>
</dbReference>
<dbReference type="Reactome" id="R-MMU-9762114">
    <property type="pathway name" value="GSK3B and BTRC:CUL1-mediated-degradation of NFE2L2"/>
</dbReference>
<dbReference type="Reactome" id="R-MMU-983168">
    <property type="pathway name" value="Antigen processing: Ubiquitination &amp; Proteasome degradation"/>
</dbReference>
<dbReference type="Reactome" id="R-MMU-9907900">
    <property type="pathway name" value="Proteasome assembly"/>
</dbReference>
<dbReference type="BioGRID-ORCS" id="26444">
    <property type="hits" value="29 hits in 77 CRISPR screens"/>
</dbReference>
<dbReference type="ChiTaRS" id="Psma7">
    <property type="organism name" value="mouse"/>
</dbReference>
<dbReference type="EvolutionaryTrace" id="Q9Z2U0"/>
<dbReference type="PRO" id="PR:Q9Z2U0"/>
<dbReference type="Proteomes" id="UP000000589">
    <property type="component" value="Chromosome 2"/>
</dbReference>
<dbReference type="RNAct" id="Q9Z2U0">
    <property type="molecule type" value="protein"/>
</dbReference>
<dbReference type="Bgee" id="ENSMUSG00000027566">
    <property type="expression patterns" value="Expressed in floor plate of midbrain and 264 other cell types or tissues"/>
</dbReference>
<dbReference type="ExpressionAtlas" id="Q9Z2U0">
    <property type="expression patterns" value="baseline and differential"/>
</dbReference>
<dbReference type="GO" id="GO:0005829">
    <property type="term" value="C:cytosol"/>
    <property type="evidence" value="ECO:0000304"/>
    <property type="project" value="Reactome"/>
</dbReference>
<dbReference type="GO" id="GO:0005654">
    <property type="term" value="C:nucleoplasm"/>
    <property type="evidence" value="ECO:0000304"/>
    <property type="project" value="Reactome"/>
</dbReference>
<dbReference type="GO" id="GO:0005839">
    <property type="term" value="C:proteasome core complex"/>
    <property type="evidence" value="ECO:0000314"/>
    <property type="project" value="UniProtKB"/>
</dbReference>
<dbReference type="GO" id="GO:0019773">
    <property type="term" value="C:proteasome core complex, alpha-subunit complex"/>
    <property type="evidence" value="ECO:0000250"/>
    <property type="project" value="UniProtKB"/>
</dbReference>
<dbReference type="GO" id="GO:0042802">
    <property type="term" value="F:identical protein binding"/>
    <property type="evidence" value="ECO:0007669"/>
    <property type="project" value="Ensembl"/>
</dbReference>
<dbReference type="GO" id="GO:0006511">
    <property type="term" value="P:ubiquitin-dependent protein catabolic process"/>
    <property type="evidence" value="ECO:0007669"/>
    <property type="project" value="InterPro"/>
</dbReference>
<dbReference type="CDD" id="cd03755">
    <property type="entry name" value="proteasome_alpha_type_7"/>
    <property type="match status" value="1"/>
</dbReference>
<dbReference type="FunFam" id="3.60.20.10:FF:000018">
    <property type="entry name" value="Proteasome subunit alpha type"/>
    <property type="match status" value="1"/>
</dbReference>
<dbReference type="Gene3D" id="3.60.20.10">
    <property type="entry name" value="Glutamine Phosphoribosylpyrophosphate, subunit 1, domain 1"/>
    <property type="match status" value="1"/>
</dbReference>
<dbReference type="InterPro" id="IPR029055">
    <property type="entry name" value="Ntn_hydrolases_N"/>
</dbReference>
<dbReference type="InterPro" id="IPR050115">
    <property type="entry name" value="Proteasome_alpha"/>
</dbReference>
<dbReference type="InterPro" id="IPR023332">
    <property type="entry name" value="Proteasome_alpha-type"/>
</dbReference>
<dbReference type="InterPro" id="IPR000426">
    <property type="entry name" value="Proteasome_asu_N"/>
</dbReference>
<dbReference type="InterPro" id="IPR001353">
    <property type="entry name" value="Proteasome_sua/b"/>
</dbReference>
<dbReference type="NCBIfam" id="NF003075">
    <property type="entry name" value="PRK03996.1"/>
    <property type="match status" value="1"/>
</dbReference>
<dbReference type="PANTHER" id="PTHR11599">
    <property type="entry name" value="PROTEASOME SUBUNIT ALPHA/BETA"/>
    <property type="match status" value="1"/>
</dbReference>
<dbReference type="Pfam" id="PF00227">
    <property type="entry name" value="Proteasome"/>
    <property type="match status" value="1"/>
</dbReference>
<dbReference type="Pfam" id="PF10584">
    <property type="entry name" value="Proteasome_A_N"/>
    <property type="match status" value="1"/>
</dbReference>
<dbReference type="SMART" id="SM00948">
    <property type="entry name" value="Proteasome_A_N"/>
    <property type="match status" value="1"/>
</dbReference>
<dbReference type="SUPFAM" id="SSF56235">
    <property type="entry name" value="N-terminal nucleophile aminohydrolases (Ntn hydrolases)"/>
    <property type="match status" value="1"/>
</dbReference>
<dbReference type="PROSITE" id="PS00388">
    <property type="entry name" value="PROTEASOME_ALPHA_1"/>
    <property type="match status" value="1"/>
</dbReference>
<dbReference type="PROSITE" id="PS51475">
    <property type="entry name" value="PROTEASOME_ALPHA_2"/>
    <property type="match status" value="1"/>
</dbReference>
<feature type="chain" id="PRO_0000124143" description="Proteasome subunit alpha type-7">
    <location>
        <begin position="1"/>
        <end position="248"/>
    </location>
</feature>
<feature type="modified residue" description="Phosphotyrosine; by ABL1 and ABL2" evidence="1">
    <location>
        <position position="153"/>
    </location>
</feature>
<feature type="modified residue" description="N6-acetyllysine" evidence="1">
    <location>
        <position position="227"/>
    </location>
</feature>
<feature type="glycosylation site" description="O-linked (GlcNAc) serine" evidence="7">
    <location>
        <position position="130"/>
    </location>
</feature>
<feature type="helix" evidence="8">
    <location>
        <begin position="17"/>
        <end position="27"/>
    </location>
</feature>
<feature type="strand" evidence="8">
    <location>
        <begin position="32"/>
        <end position="36"/>
    </location>
</feature>
<feature type="strand" evidence="8">
    <location>
        <begin position="38"/>
        <end position="45"/>
    </location>
</feature>
<feature type="strand" evidence="8">
    <location>
        <begin position="52"/>
        <end position="54"/>
    </location>
</feature>
<feature type="turn" evidence="8">
    <location>
        <begin position="56"/>
        <end position="59"/>
    </location>
</feature>
<feature type="strand" evidence="8">
    <location>
        <begin position="62"/>
        <end position="64"/>
    </location>
</feature>
<feature type="strand" evidence="8">
    <location>
        <begin position="66"/>
        <end position="75"/>
    </location>
</feature>
<feature type="helix" evidence="8">
    <location>
        <begin position="77"/>
        <end position="97"/>
    </location>
</feature>
<feature type="strand" evidence="9">
    <location>
        <begin position="98"/>
        <end position="100"/>
    </location>
</feature>
<feature type="helix" evidence="8">
    <location>
        <begin position="104"/>
        <end position="117"/>
    </location>
</feature>
<feature type="strand" evidence="8">
    <location>
        <begin position="120"/>
        <end position="122"/>
    </location>
</feature>
<feature type="strand" evidence="8">
    <location>
        <begin position="129"/>
        <end position="136"/>
    </location>
</feature>
<feature type="strand" evidence="8">
    <location>
        <begin position="142"/>
        <end position="147"/>
    </location>
</feature>
<feature type="strand" evidence="8">
    <location>
        <begin position="153"/>
        <end position="162"/>
    </location>
</feature>
<feature type="helix" evidence="8">
    <location>
        <begin position="165"/>
        <end position="175"/>
    </location>
</feature>
<feature type="turn" evidence="8">
    <location>
        <begin position="178"/>
        <end position="181"/>
    </location>
</feature>
<feature type="helix" evidence="8">
    <location>
        <begin position="184"/>
        <end position="195"/>
    </location>
</feature>
<feature type="turn" evidence="8">
    <location>
        <begin position="196"/>
        <end position="198"/>
    </location>
</feature>
<feature type="strand" evidence="8">
    <location>
        <begin position="199"/>
        <end position="201"/>
    </location>
</feature>
<feature type="strand" evidence="8">
    <location>
        <begin position="203"/>
        <end position="205"/>
    </location>
</feature>
<feature type="strand" evidence="8">
    <location>
        <begin position="207"/>
        <end position="215"/>
    </location>
</feature>
<feature type="strand" evidence="8">
    <location>
        <begin position="217"/>
        <end position="219"/>
    </location>
</feature>
<feature type="helix" evidence="8">
    <location>
        <begin position="222"/>
        <end position="236"/>
    </location>
</feature>
<proteinExistence type="evidence at protein level"/>
<comment type="function">
    <text evidence="4 6">Component of the 20S core proteasome complex involved in the proteolytic degradation of most intracellular proteins. This complex plays numerous essential roles within the cell by associating with different regulatory particles. Associated with two 19S regulatory particles, forms the 26S proteasome and thus participates in the ATP-dependent degradation of ubiquitinated proteins. The 26S proteasome plays a key role in the maintenance of protein homeostasis by removing misfolded or damaged proteins that could impair cellular functions, and by removing proteins whose functions are no longer required. Associated with the PA200 or PA28, the 20S proteasome mediates ubiquitin-independent protein degradation. This type of proteolysis is required in several pathways including spermatogenesis (20S-PA200 complex) or generation of a subset of MHC class I-presented antigenic peptides (20S-PA28 complex).</text>
</comment>
<comment type="subunit">
    <text evidence="1 5 6">The 26S proteasome consists of a 20S proteasome core and two 19S regulatory subunits. The 20S proteasome core is a barrel-shaped complex made of 28 subunits that are arranged in four stacked rings. The two outer rings are each formed by seven alpha subunits, and the two inner rings are formed by seven beta subunits. The proteolytic activity is exerted by three beta-subunits PSMB5, PSMB6 and PSMB7 (PubMed:16857966, PubMed:22341445). PSMA7 interacts directly with the PSMG1-PSMG2 heterodimer which promotes 20S proteasome assembly (By similarity). Interacts with HIF1A (By similarity). Interacts with RAB7A (By similarity). Interacts with PRKN (By similarity). Interacts with ABL1 and ABL2 (By similarity). Interacts with EMAP2 (By similarity). Interacts with MAVS (By similarity).</text>
</comment>
<comment type="subcellular location">
    <subcellularLocation>
        <location evidence="1">Cytoplasm</location>
    </subcellularLocation>
    <subcellularLocation>
        <location evidence="1">Nucleus</location>
    </subcellularLocation>
    <text evidence="1">Translocated from the cytoplasm into the nucleus following interaction with AKIRIN2, which bridges the proteasome with the nuclear import receptor IPO9.</text>
</comment>
<comment type="tissue specificity">
    <text evidence="6">Detected in liver (at protein level).</text>
</comment>
<comment type="induction">
    <text evidence="3">Up-regulated in liver tumor tissues.</text>
</comment>
<comment type="PTM">
    <text>Phosphorylation by ABL1 or ABL2 leads to an inhibition of proteasomal activity and cell cycle transition blocks.</text>
</comment>
<comment type="similarity">
    <text evidence="2">Belongs to the peptidase T1A family.</text>
</comment>